<comment type="function">
    <text evidence="3">Neurofilaments usually contain three intermediate filament proteins: NEFL, NEFM, and NEFH which are involved in the maintenance of neuronal caliber. May additionally cooperate with the neuronal intermediate filament proteins PRPH and INA to form neuronal filamentous networks (By similarity).</text>
</comment>
<comment type="subunit">
    <text evidence="1 4">Forms homodimers (in vitro) (By similarity). Forms heterodimers with NEFH or NEFM; which can further hetero-oligomerize (in vitro) (By similarity). Forms heterodimers with INA (in vitro) (By similarity). Interacts with ARHGEF28. Interacts with TRIM2.</text>
</comment>
<comment type="subcellular location">
    <subcellularLocation>
        <location evidence="3">Cell projection</location>
        <location evidence="3">Axon</location>
    </subcellularLocation>
    <subcellularLocation>
        <location evidence="3">Cytoplasm</location>
        <location evidence="3">Cytoskeleton</location>
    </subcellularLocation>
</comment>
<comment type="PTM">
    <text evidence="1">Phosphorylated in the head and rod regions by the PKC kinase PKN1, leading to the inhibition of polymerization.</text>
</comment>
<comment type="PTM">
    <text evidence="1">Ubiquitinated in the presence of TRIM2 and UBE2D1.</text>
</comment>
<comment type="miscellaneous">
    <text>NF-L is the most abundant of the three neurofilament proteins and, like the other nonepithelial intermediate filament proteins, it can form homomeric 10-nm filaments.</text>
</comment>
<comment type="similarity">
    <text evidence="5">Belongs to the intermediate filament family.</text>
</comment>
<comment type="sequence caution" evidence="7">
    <conflict type="frameshift">
        <sequence resource="EMBL-CDS" id="CAH92515"/>
    </conflict>
</comment>
<accession>Q5R408</accession>
<accession>Q5R689</accession>
<accession>Q5R6Q8</accession>
<accession>Q5R6U5</accession>
<dbReference type="EMBL" id="CR860389">
    <property type="protein sequence ID" value="CAH92515.1"/>
    <property type="status" value="ALT_FRAME"/>
    <property type="molecule type" value="mRNA"/>
</dbReference>
<dbReference type="EMBL" id="CR860427">
    <property type="protein sequence ID" value="CAH92552.1"/>
    <property type="molecule type" value="mRNA"/>
</dbReference>
<dbReference type="EMBL" id="CR860605">
    <property type="protein sequence ID" value="CAH92727.1"/>
    <property type="molecule type" value="mRNA"/>
</dbReference>
<dbReference type="EMBL" id="CR861452">
    <property type="protein sequence ID" value="CAH93508.1"/>
    <property type="molecule type" value="mRNA"/>
</dbReference>
<dbReference type="RefSeq" id="NP_001126494.1">
    <property type="nucleotide sequence ID" value="NM_001133022.2"/>
</dbReference>
<dbReference type="SMR" id="Q5R408"/>
<dbReference type="FunCoup" id="Q5R408">
    <property type="interactions" value="315"/>
</dbReference>
<dbReference type="STRING" id="9601.ENSPPYP00000020675"/>
<dbReference type="GlyCosmos" id="Q5R408">
    <property type="glycosylation" value="2 sites, No reported glycans"/>
</dbReference>
<dbReference type="Ensembl" id="ENSPPYT00000021504.3">
    <property type="protein sequence ID" value="ENSPPYP00000020675.2"/>
    <property type="gene ID" value="ENSPPYG00000018449.3"/>
</dbReference>
<dbReference type="GeneID" id="100173482"/>
<dbReference type="KEGG" id="pon:100173482"/>
<dbReference type="CTD" id="4747"/>
<dbReference type="eggNOG" id="ENOG502QSXY">
    <property type="taxonomic scope" value="Eukaryota"/>
</dbReference>
<dbReference type="GeneTree" id="ENSGT00940000156208"/>
<dbReference type="HOGENOM" id="CLU_012560_7_3_1"/>
<dbReference type="InParanoid" id="Q5R408"/>
<dbReference type="OMA" id="YKRRYME"/>
<dbReference type="OrthoDB" id="2441647at2759"/>
<dbReference type="TreeFam" id="TF330122"/>
<dbReference type="Proteomes" id="UP000001595">
    <property type="component" value="Chromosome 8"/>
</dbReference>
<dbReference type="GO" id="GO:1904115">
    <property type="term" value="C:axon cytoplasm"/>
    <property type="evidence" value="ECO:0007669"/>
    <property type="project" value="GOC"/>
</dbReference>
<dbReference type="GO" id="GO:0098981">
    <property type="term" value="C:cholinergic synapse"/>
    <property type="evidence" value="ECO:0007669"/>
    <property type="project" value="Ensembl"/>
</dbReference>
<dbReference type="GO" id="GO:0005883">
    <property type="term" value="C:neurofilament"/>
    <property type="evidence" value="ECO:0007669"/>
    <property type="project" value="Ensembl"/>
</dbReference>
<dbReference type="GO" id="GO:0031594">
    <property type="term" value="C:neuromuscular junction"/>
    <property type="evidence" value="ECO:0007669"/>
    <property type="project" value="Ensembl"/>
</dbReference>
<dbReference type="GO" id="GO:0099160">
    <property type="term" value="C:postsynaptic intermediate filament cytoskeleton"/>
    <property type="evidence" value="ECO:0007669"/>
    <property type="project" value="Ensembl"/>
</dbReference>
<dbReference type="GO" id="GO:0099182">
    <property type="term" value="C:presynaptic intermediate filament cytoskeleton"/>
    <property type="evidence" value="ECO:0007669"/>
    <property type="project" value="Ensembl"/>
</dbReference>
<dbReference type="GO" id="GO:0098685">
    <property type="term" value="C:Schaffer collateral - CA1 synapse"/>
    <property type="evidence" value="ECO:0007669"/>
    <property type="project" value="Ensembl"/>
</dbReference>
<dbReference type="GO" id="GO:0042802">
    <property type="term" value="F:identical protein binding"/>
    <property type="evidence" value="ECO:0007669"/>
    <property type="project" value="Ensembl"/>
</dbReference>
<dbReference type="GO" id="GO:0030674">
    <property type="term" value="F:protein-macromolecule adaptor activity"/>
    <property type="evidence" value="ECO:0007669"/>
    <property type="project" value="Ensembl"/>
</dbReference>
<dbReference type="GO" id="GO:0099184">
    <property type="term" value="F:structural constituent of postsynaptic intermediate filament cytoskeleton"/>
    <property type="evidence" value="ECO:0007669"/>
    <property type="project" value="Ensembl"/>
</dbReference>
<dbReference type="GO" id="GO:0015631">
    <property type="term" value="F:tubulin binding"/>
    <property type="evidence" value="ECO:0007669"/>
    <property type="project" value="Ensembl"/>
</dbReference>
<dbReference type="GO" id="GO:0008089">
    <property type="term" value="P:anterograde axonal transport"/>
    <property type="evidence" value="ECO:0007669"/>
    <property type="project" value="Ensembl"/>
</dbReference>
<dbReference type="GO" id="GO:0019896">
    <property type="term" value="P:axonal transport of mitochondrion"/>
    <property type="evidence" value="ECO:0007669"/>
    <property type="project" value="Ensembl"/>
</dbReference>
<dbReference type="GO" id="GO:0007409">
    <property type="term" value="P:axonogenesis"/>
    <property type="evidence" value="ECO:0007669"/>
    <property type="project" value="Ensembl"/>
</dbReference>
<dbReference type="GO" id="GO:0040011">
    <property type="term" value="P:locomotion"/>
    <property type="evidence" value="ECO:0007669"/>
    <property type="project" value="Ensembl"/>
</dbReference>
<dbReference type="GO" id="GO:0000226">
    <property type="term" value="P:microtubule cytoskeleton organization"/>
    <property type="evidence" value="ECO:0007669"/>
    <property type="project" value="Ensembl"/>
</dbReference>
<dbReference type="GO" id="GO:0097049">
    <property type="term" value="P:motor neuron apoptotic process"/>
    <property type="evidence" value="ECO:0007669"/>
    <property type="project" value="Ensembl"/>
</dbReference>
<dbReference type="GO" id="GO:2000672">
    <property type="term" value="P:negative regulation of motor neuron apoptotic process"/>
    <property type="evidence" value="ECO:0007669"/>
    <property type="project" value="Ensembl"/>
</dbReference>
<dbReference type="GO" id="GO:0033693">
    <property type="term" value="P:neurofilament bundle assembly"/>
    <property type="evidence" value="ECO:0007669"/>
    <property type="project" value="Ensembl"/>
</dbReference>
<dbReference type="GO" id="GO:0060052">
    <property type="term" value="P:neurofilament cytoskeleton organization"/>
    <property type="evidence" value="ECO:0007669"/>
    <property type="project" value="Ensembl"/>
</dbReference>
<dbReference type="GO" id="GO:0050885">
    <property type="term" value="P:neuromuscular process controlling balance"/>
    <property type="evidence" value="ECO:0007669"/>
    <property type="project" value="Ensembl"/>
</dbReference>
<dbReference type="GO" id="GO:0014012">
    <property type="term" value="P:peripheral nervous system axon regeneration"/>
    <property type="evidence" value="ECO:0007669"/>
    <property type="project" value="Ensembl"/>
</dbReference>
<dbReference type="GO" id="GO:0050772">
    <property type="term" value="P:positive regulation of axonogenesis"/>
    <property type="evidence" value="ECO:0007669"/>
    <property type="project" value="Ensembl"/>
</dbReference>
<dbReference type="GO" id="GO:0099170">
    <property type="term" value="P:postsynaptic modulation of chemical synaptic transmission"/>
    <property type="evidence" value="ECO:0007669"/>
    <property type="project" value="Ensembl"/>
</dbReference>
<dbReference type="GO" id="GO:0031133">
    <property type="term" value="P:regulation of axon diameter"/>
    <property type="evidence" value="ECO:0007669"/>
    <property type="project" value="Ensembl"/>
</dbReference>
<dbReference type="GO" id="GO:0090128">
    <property type="term" value="P:regulation of synapse maturation"/>
    <property type="evidence" value="ECO:0007669"/>
    <property type="project" value="Ensembl"/>
</dbReference>
<dbReference type="GO" id="GO:0008090">
    <property type="term" value="P:retrograde axonal transport"/>
    <property type="evidence" value="ECO:0007669"/>
    <property type="project" value="Ensembl"/>
</dbReference>
<dbReference type="FunFam" id="1.20.5.1160:FF:000001">
    <property type="entry name" value="Keratin type II"/>
    <property type="match status" value="1"/>
</dbReference>
<dbReference type="FunFam" id="1.20.5.170:FF:000002">
    <property type="entry name" value="Type I keratin KA11"/>
    <property type="match status" value="1"/>
</dbReference>
<dbReference type="FunFam" id="1.20.5.500:FF:000001">
    <property type="entry name" value="Type II keratin 23"/>
    <property type="match status" value="1"/>
</dbReference>
<dbReference type="Gene3D" id="1.20.5.170">
    <property type="match status" value="1"/>
</dbReference>
<dbReference type="Gene3D" id="1.20.5.500">
    <property type="entry name" value="Single helix bin"/>
    <property type="match status" value="1"/>
</dbReference>
<dbReference type="Gene3D" id="1.20.5.1160">
    <property type="entry name" value="Vasodilator-stimulated phosphoprotein"/>
    <property type="match status" value="1"/>
</dbReference>
<dbReference type="InterPro" id="IPR018039">
    <property type="entry name" value="IF_conserved"/>
</dbReference>
<dbReference type="InterPro" id="IPR039008">
    <property type="entry name" value="IF_rod_dom"/>
</dbReference>
<dbReference type="InterPro" id="IPR006821">
    <property type="entry name" value="Intermed_filament_DNA-bd"/>
</dbReference>
<dbReference type="InterPro" id="IPR050405">
    <property type="entry name" value="Intermediate_filament"/>
</dbReference>
<dbReference type="PANTHER" id="PTHR45652">
    <property type="entry name" value="GLIAL FIBRILLARY ACIDIC PROTEIN"/>
    <property type="match status" value="1"/>
</dbReference>
<dbReference type="PANTHER" id="PTHR45652:SF8">
    <property type="entry name" value="NEUROFILAMENT LIGHT POLYPEPTIDE"/>
    <property type="match status" value="1"/>
</dbReference>
<dbReference type="Pfam" id="PF00038">
    <property type="entry name" value="Filament"/>
    <property type="match status" value="1"/>
</dbReference>
<dbReference type="Pfam" id="PF04732">
    <property type="entry name" value="Filament_head"/>
    <property type="match status" value="1"/>
</dbReference>
<dbReference type="SMART" id="SM01391">
    <property type="entry name" value="Filament"/>
    <property type="match status" value="1"/>
</dbReference>
<dbReference type="SUPFAM" id="SSF64593">
    <property type="entry name" value="Intermediate filament protein, coiled coil region"/>
    <property type="match status" value="2"/>
</dbReference>
<dbReference type="PROSITE" id="PS00226">
    <property type="entry name" value="IF_ROD_1"/>
    <property type="match status" value="1"/>
</dbReference>
<dbReference type="PROSITE" id="PS51842">
    <property type="entry name" value="IF_ROD_2"/>
    <property type="match status" value="1"/>
</dbReference>
<keyword id="KW-0007">Acetylation</keyword>
<keyword id="KW-0966">Cell projection</keyword>
<keyword id="KW-0175">Coiled coil</keyword>
<keyword id="KW-0963">Cytoplasm</keyword>
<keyword id="KW-0206">Cytoskeleton</keyword>
<keyword id="KW-0325">Glycoprotein</keyword>
<keyword id="KW-0403">Intermediate filament</keyword>
<keyword id="KW-0488">Methylation</keyword>
<keyword id="KW-0597">Phosphoprotein</keyword>
<keyword id="KW-1185">Reference proteome</keyword>
<keyword id="KW-0832">Ubl conjugation</keyword>
<sequence length="543" mass="61517">MSSFSYEPYYSTSYKRRYVETPRVHISSVRSGYSTARSAYSSYSAPVSSSLSVRRSYSSSSGSLMPSLENLDLSQVAAISNDLKSIRTQEKAQLQDLNDRFASFIERVHELEQQNKVLEAELLVLRQKHSEPSRFRALYEQEIRDLRLAAEDATNEKQALQGEREGLEETLRNLQARYEEEVLSREDAEGRLMEARKGADEAALARAELEKRIDSLMDEISFLKKVHEEEIAELQAQIQYAQISVEMDVTKPDLSAALKDIRAQYEKLAAKNMQNAEEWFKSRFTVLTESAAKNTDAVRAAKDEVSESRRLLKAKTLEIEACRGMNEALEKQLQELEDKQNADISAMQDTINKLENELRTTKSEMARYLKEYQDLLNVKMALDIEIAAYRKLLEGEETRLSFTSVGSITSGYSQSSQVFGRSAYGGLQTSSYLMSTRSFPSYYTSHVQEEQIEVEETIEAAKAEEAKDEPPSEGEAEEEEKDKEEAEEEEAAEEEEAAKEESEEAKEEEEGGEGEEGEETKEAEEEEKKVEGAGEEQAAKKKD</sequence>
<gene>
    <name type="primary">NEFL</name>
</gene>
<organism>
    <name type="scientific">Pongo abelii</name>
    <name type="common">Sumatran orangutan</name>
    <name type="synonym">Pongo pygmaeus abelii</name>
    <dbReference type="NCBI Taxonomy" id="9601"/>
    <lineage>
        <taxon>Eukaryota</taxon>
        <taxon>Metazoa</taxon>
        <taxon>Chordata</taxon>
        <taxon>Craniata</taxon>
        <taxon>Vertebrata</taxon>
        <taxon>Euteleostomi</taxon>
        <taxon>Mammalia</taxon>
        <taxon>Eutheria</taxon>
        <taxon>Euarchontoglires</taxon>
        <taxon>Primates</taxon>
        <taxon>Haplorrhini</taxon>
        <taxon>Catarrhini</taxon>
        <taxon>Hominidae</taxon>
        <taxon>Pongo</taxon>
    </lineage>
</organism>
<feature type="initiator methionine" description="Removed" evidence="2">
    <location>
        <position position="1"/>
    </location>
</feature>
<feature type="chain" id="PRO_0000373799" description="Neurofilament light polypeptide">
    <location>
        <begin position="2"/>
        <end position="543"/>
    </location>
</feature>
<feature type="domain" description="IF rod" evidence="5">
    <location>
        <begin position="90"/>
        <end position="400"/>
    </location>
</feature>
<feature type="region of interest" description="Head" evidence="1">
    <location>
        <begin position="2"/>
        <end position="92"/>
    </location>
</feature>
<feature type="region of interest" description="Coil 1A" evidence="1">
    <location>
        <begin position="93"/>
        <end position="124"/>
    </location>
</feature>
<feature type="region of interest" description="Linker 1" evidence="1">
    <location>
        <begin position="125"/>
        <end position="137"/>
    </location>
</feature>
<feature type="region of interest" description="Coil 1B" evidence="1">
    <location>
        <begin position="138"/>
        <end position="234"/>
    </location>
</feature>
<feature type="region of interest" description="Linker 12" evidence="1">
    <location>
        <begin position="235"/>
        <end position="252"/>
    </location>
</feature>
<feature type="region of interest" description="Coil 2A" evidence="1">
    <location>
        <begin position="253"/>
        <end position="271"/>
    </location>
</feature>
<feature type="region of interest" description="Linker 2" evidence="1">
    <location>
        <begin position="272"/>
        <end position="280"/>
    </location>
</feature>
<feature type="region of interest" description="Coil 2B" evidence="1">
    <location>
        <begin position="281"/>
        <end position="396"/>
    </location>
</feature>
<feature type="region of interest" description="Tail" evidence="1">
    <location>
        <begin position="397"/>
        <end position="543"/>
    </location>
</feature>
<feature type="region of interest" description="Tail, subdomain A" evidence="1">
    <location>
        <begin position="397"/>
        <end position="443"/>
    </location>
</feature>
<feature type="region of interest" description="Tail, subdomain B (acidic)" evidence="1">
    <location>
        <begin position="444"/>
        <end position="543"/>
    </location>
</feature>
<feature type="region of interest" description="Disordered" evidence="6">
    <location>
        <begin position="462"/>
        <end position="543"/>
    </location>
</feature>
<feature type="compositionally biased region" description="Acidic residues" evidence="6">
    <location>
        <begin position="471"/>
        <end position="525"/>
    </location>
</feature>
<feature type="compositionally biased region" description="Basic and acidic residues" evidence="6">
    <location>
        <begin position="526"/>
        <end position="543"/>
    </location>
</feature>
<feature type="modified residue" description="N-acetylserine" evidence="2">
    <location>
        <position position="2"/>
    </location>
</feature>
<feature type="modified residue" description="Asymmetric dimethylarginine; alternate" evidence="3">
    <location>
        <position position="23"/>
    </location>
</feature>
<feature type="modified residue" description="Omega-N-methylarginine; alternate" evidence="3">
    <location>
        <position position="23"/>
    </location>
</feature>
<feature type="modified residue" description="Omega-N-methylarginine" evidence="3">
    <location>
        <position position="30"/>
    </location>
</feature>
<feature type="modified residue" description="Phosphotyrosine" evidence="3">
    <location>
        <position position="43"/>
    </location>
</feature>
<feature type="modified residue" description="Phosphoserine" evidence="2">
    <location>
        <position position="56"/>
    </location>
</feature>
<feature type="modified residue" description="Phosphoserine" evidence="2">
    <location>
        <position position="67"/>
    </location>
</feature>
<feature type="modified residue" description="Phosphoserine" evidence="4">
    <location>
        <position position="103"/>
    </location>
</feature>
<feature type="modified residue" description="Phosphoserine" evidence="2">
    <location>
        <position position="472"/>
    </location>
</feature>
<feature type="modified residue" description="Phosphoserine" evidence="4">
    <location>
        <position position="502"/>
    </location>
</feature>
<feature type="modified residue" description="Phosphothreonine" evidence="4">
    <location>
        <position position="520"/>
    </location>
</feature>
<feature type="glycosylation site" description="O-linked (GlcNAc) threonine" evidence="1">
    <location>
        <position position="21"/>
    </location>
</feature>
<feature type="glycosylation site" description="O-linked (GlcNAc) serine" evidence="1">
    <location>
        <position position="27"/>
    </location>
</feature>
<feature type="sequence conflict" description="In Ref. 1; CAH92552." evidence="7" ref="1">
    <original>Y</original>
    <variation>H</variation>
    <location>
        <position position="10"/>
    </location>
</feature>
<feature type="sequence conflict" description="In Ref. 1; CAH92515." evidence="7" ref="1">
    <original>S</original>
    <variation>R</variation>
    <location>
        <position position="31"/>
    </location>
</feature>
<feature type="sequence conflict" description="In Ref. 1; CAH92515." evidence="7" ref="1">
    <original>L</original>
    <variation>V</variation>
    <location>
        <position position="94"/>
    </location>
</feature>
<feature type="sequence conflict" description="In Ref. 1; CAH93508." evidence="7" ref="1">
    <original>A</original>
    <variation>T</variation>
    <location>
        <position position="153"/>
    </location>
</feature>
<feature type="sequence conflict" description="In Ref. 1; CAH93508." evidence="7" ref="1">
    <original>R</original>
    <variation>H</variation>
    <location>
        <position position="206"/>
    </location>
</feature>
<feature type="sequence conflict" description="In Ref. 1; CAH93508." evidence="7" ref="1">
    <original>Y</original>
    <variation>C</variation>
    <location>
        <position position="389"/>
    </location>
</feature>
<feature type="sequence conflict" description="In Ref. 1; CAH92552." evidence="7" ref="1">
    <original>K</original>
    <variation>R</variation>
    <location>
        <position position="540"/>
    </location>
</feature>
<name>NFL_PONAB</name>
<evidence type="ECO:0000250" key="1"/>
<evidence type="ECO:0000250" key="2">
    <source>
        <dbReference type="UniProtKB" id="P02548"/>
    </source>
</evidence>
<evidence type="ECO:0000250" key="3">
    <source>
        <dbReference type="UniProtKB" id="P08551"/>
    </source>
</evidence>
<evidence type="ECO:0000250" key="4">
    <source>
        <dbReference type="UniProtKB" id="P19527"/>
    </source>
</evidence>
<evidence type="ECO:0000255" key="5">
    <source>
        <dbReference type="PROSITE-ProRule" id="PRU01188"/>
    </source>
</evidence>
<evidence type="ECO:0000256" key="6">
    <source>
        <dbReference type="SAM" id="MobiDB-lite"/>
    </source>
</evidence>
<evidence type="ECO:0000305" key="7"/>
<protein>
    <recommendedName>
        <fullName>Neurofilament light polypeptide</fullName>
        <shortName>NF-L</shortName>
    </recommendedName>
    <alternativeName>
        <fullName>Neurofilament triplet L protein</fullName>
    </alternativeName>
</protein>
<reference key="1">
    <citation type="submission" date="2004-11" db="EMBL/GenBank/DDBJ databases">
        <authorList>
            <consortium name="The German cDNA consortium"/>
        </authorList>
    </citation>
    <scope>NUCLEOTIDE SEQUENCE [LARGE SCALE MRNA]</scope>
    <source>
        <tissue>Brain cortex</tissue>
    </source>
</reference>
<proteinExistence type="evidence at transcript level"/>